<reference key="1">
    <citation type="submission" date="2004-06" db="EMBL/GenBank/DDBJ databases">
        <authorList>
            <person name="Birren B.W."/>
            <person name="Stange-Thomann N."/>
            <person name="Hafez N."/>
            <person name="DeCaprio D."/>
            <person name="Fisher S."/>
            <person name="Butler J."/>
            <person name="Elkins T."/>
            <person name="Kodira C.D."/>
            <person name="Major J."/>
            <person name="Wang S."/>
            <person name="Nicol R."/>
            <person name="Nusbaum C."/>
        </authorList>
    </citation>
    <scope>NUCLEOTIDE SEQUENCE [LARGE SCALE GENOMIC DNA]</scope>
    <source>
        <strain>ATCC 33453 / NBRC 100688 / NCTC 11704 / L1</strain>
    </source>
</reference>
<gene>
    <name evidence="1" type="primary">rpsM</name>
    <name type="ordered locus">Mfl148</name>
</gene>
<accession>Q6F1W9</accession>
<evidence type="ECO:0000255" key="1">
    <source>
        <dbReference type="HAMAP-Rule" id="MF_01315"/>
    </source>
</evidence>
<evidence type="ECO:0000256" key="2">
    <source>
        <dbReference type="SAM" id="MobiDB-lite"/>
    </source>
</evidence>
<evidence type="ECO:0000305" key="3"/>
<comment type="function">
    <text evidence="1">Located at the top of the head of the 30S subunit, it contacts several helices of the 16S rRNA. In the 70S ribosome it contacts the 23S rRNA (bridge B1a) and protein L5 of the 50S subunit (bridge B1b), connecting the 2 subunits; these bridges are implicated in subunit movement. Contacts the tRNAs in the A and P-sites.</text>
</comment>
<comment type="subunit">
    <text evidence="1">Part of the 30S ribosomal subunit. Forms a loose heterodimer with protein S19. Forms two bridges to the 50S subunit in the 70S ribosome.</text>
</comment>
<comment type="similarity">
    <text evidence="1">Belongs to the universal ribosomal protein uS13 family.</text>
</comment>
<feature type="chain" id="PRO_0000230524" description="Small ribosomal subunit protein uS13">
    <location>
        <begin position="1"/>
        <end position="121"/>
    </location>
</feature>
<feature type="region of interest" description="Disordered" evidence="2">
    <location>
        <begin position="94"/>
        <end position="121"/>
    </location>
</feature>
<feature type="compositionally biased region" description="Basic residues" evidence="2">
    <location>
        <begin position="110"/>
        <end position="121"/>
    </location>
</feature>
<organism>
    <name type="scientific">Mesoplasma florum (strain ATCC 33453 / NBRC 100688 / NCTC 11704 / L1)</name>
    <name type="common">Acholeplasma florum</name>
    <dbReference type="NCBI Taxonomy" id="265311"/>
    <lineage>
        <taxon>Bacteria</taxon>
        <taxon>Bacillati</taxon>
        <taxon>Mycoplasmatota</taxon>
        <taxon>Mollicutes</taxon>
        <taxon>Entomoplasmatales</taxon>
        <taxon>Entomoplasmataceae</taxon>
        <taxon>Mesoplasma</taxon>
    </lineage>
</organism>
<name>RS13_MESFL</name>
<keyword id="KW-1185">Reference proteome</keyword>
<keyword id="KW-0687">Ribonucleoprotein</keyword>
<keyword id="KW-0689">Ribosomal protein</keyword>
<keyword id="KW-0694">RNA-binding</keyword>
<keyword id="KW-0699">rRNA-binding</keyword>
<keyword id="KW-0820">tRNA-binding</keyword>
<sequence length="121" mass="13668">MARISGVEIPNEKRVVISLTYIYGIGLSTSQKVLSKLNISEDVRTRDLTEEQIKAISTEISNFKVEGELRREVSLNIKRLMEIGCYRGLRHRKGLPVRGQSSKTNARTVKGPRKTVANKKK</sequence>
<dbReference type="EMBL" id="AE017263">
    <property type="protein sequence ID" value="AAT75504.1"/>
    <property type="molecule type" value="Genomic_DNA"/>
</dbReference>
<dbReference type="RefSeq" id="WP_011183045.1">
    <property type="nucleotide sequence ID" value="NC_006055.1"/>
</dbReference>
<dbReference type="RefSeq" id="YP_053388.1">
    <property type="nucleotide sequence ID" value="NC_006055.1"/>
</dbReference>
<dbReference type="SMR" id="Q6F1W9"/>
<dbReference type="STRING" id="265311.Mfl148"/>
<dbReference type="PaxDb" id="265311-Mfl148"/>
<dbReference type="EnsemblBacteria" id="AAT75504">
    <property type="protein sequence ID" value="AAT75504"/>
    <property type="gene ID" value="Mfl148"/>
</dbReference>
<dbReference type="GeneID" id="2897974"/>
<dbReference type="KEGG" id="mfl:Mfl148"/>
<dbReference type="PATRIC" id="fig|265311.5.peg.149"/>
<dbReference type="eggNOG" id="COG0099">
    <property type="taxonomic scope" value="Bacteria"/>
</dbReference>
<dbReference type="HOGENOM" id="CLU_103849_1_2_14"/>
<dbReference type="OrthoDB" id="9803610at2"/>
<dbReference type="Proteomes" id="UP000006647">
    <property type="component" value="Chromosome"/>
</dbReference>
<dbReference type="GO" id="GO:0005829">
    <property type="term" value="C:cytosol"/>
    <property type="evidence" value="ECO:0007669"/>
    <property type="project" value="TreeGrafter"/>
</dbReference>
<dbReference type="GO" id="GO:0015935">
    <property type="term" value="C:small ribosomal subunit"/>
    <property type="evidence" value="ECO:0007669"/>
    <property type="project" value="TreeGrafter"/>
</dbReference>
<dbReference type="GO" id="GO:0019843">
    <property type="term" value="F:rRNA binding"/>
    <property type="evidence" value="ECO:0007669"/>
    <property type="project" value="UniProtKB-UniRule"/>
</dbReference>
<dbReference type="GO" id="GO:0003735">
    <property type="term" value="F:structural constituent of ribosome"/>
    <property type="evidence" value="ECO:0007669"/>
    <property type="project" value="InterPro"/>
</dbReference>
<dbReference type="GO" id="GO:0000049">
    <property type="term" value="F:tRNA binding"/>
    <property type="evidence" value="ECO:0007669"/>
    <property type="project" value="UniProtKB-UniRule"/>
</dbReference>
<dbReference type="GO" id="GO:0006412">
    <property type="term" value="P:translation"/>
    <property type="evidence" value="ECO:0007669"/>
    <property type="project" value="UniProtKB-UniRule"/>
</dbReference>
<dbReference type="FunFam" id="1.10.8.50:FF:000001">
    <property type="entry name" value="30S ribosomal protein S13"/>
    <property type="match status" value="1"/>
</dbReference>
<dbReference type="FunFam" id="4.10.910.10:FF:000001">
    <property type="entry name" value="30S ribosomal protein S13"/>
    <property type="match status" value="1"/>
</dbReference>
<dbReference type="Gene3D" id="1.10.8.50">
    <property type="match status" value="1"/>
</dbReference>
<dbReference type="Gene3D" id="4.10.910.10">
    <property type="entry name" value="30s ribosomal protein s13, domain 2"/>
    <property type="match status" value="1"/>
</dbReference>
<dbReference type="HAMAP" id="MF_01315">
    <property type="entry name" value="Ribosomal_uS13"/>
    <property type="match status" value="1"/>
</dbReference>
<dbReference type="InterPro" id="IPR027437">
    <property type="entry name" value="Rbsml_uS13_C"/>
</dbReference>
<dbReference type="InterPro" id="IPR001892">
    <property type="entry name" value="Ribosomal_uS13"/>
</dbReference>
<dbReference type="InterPro" id="IPR010979">
    <property type="entry name" value="Ribosomal_uS13-like_H2TH"/>
</dbReference>
<dbReference type="InterPro" id="IPR019980">
    <property type="entry name" value="Ribosomal_uS13_bac-type"/>
</dbReference>
<dbReference type="InterPro" id="IPR018269">
    <property type="entry name" value="Ribosomal_uS13_CS"/>
</dbReference>
<dbReference type="NCBIfam" id="TIGR03631">
    <property type="entry name" value="uS13_bact"/>
    <property type="match status" value="1"/>
</dbReference>
<dbReference type="PANTHER" id="PTHR10871">
    <property type="entry name" value="30S RIBOSOMAL PROTEIN S13/40S RIBOSOMAL PROTEIN S18"/>
    <property type="match status" value="1"/>
</dbReference>
<dbReference type="PANTHER" id="PTHR10871:SF1">
    <property type="entry name" value="SMALL RIBOSOMAL SUBUNIT PROTEIN US13M"/>
    <property type="match status" value="1"/>
</dbReference>
<dbReference type="Pfam" id="PF00416">
    <property type="entry name" value="Ribosomal_S13"/>
    <property type="match status" value="1"/>
</dbReference>
<dbReference type="PIRSF" id="PIRSF002134">
    <property type="entry name" value="Ribosomal_S13"/>
    <property type="match status" value="1"/>
</dbReference>
<dbReference type="SUPFAM" id="SSF46946">
    <property type="entry name" value="S13-like H2TH domain"/>
    <property type="match status" value="1"/>
</dbReference>
<dbReference type="PROSITE" id="PS00646">
    <property type="entry name" value="RIBOSOMAL_S13_1"/>
    <property type="match status" value="1"/>
</dbReference>
<dbReference type="PROSITE" id="PS50159">
    <property type="entry name" value="RIBOSOMAL_S13_2"/>
    <property type="match status" value="1"/>
</dbReference>
<proteinExistence type="inferred from homology"/>
<protein>
    <recommendedName>
        <fullName evidence="1">Small ribosomal subunit protein uS13</fullName>
    </recommendedName>
    <alternativeName>
        <fullName evidence="3">30S ribosomal protein S13</fullName>
    </alternativeName>
</protein>